<gene>
    <name type="primary">sod</name>
    <name type="synonym">sodA</name>
    <name type="ordered locus">MTBMA_c06110</name>
</gene>
<reference key="1">
    <citation type="journal article" date="1995" name="FEMS Microbiol. Lett.">
        <title>Characterization of the superoxide dismutase gene and its upstream region from Methanobacterium thermoautotrophicum Marburg.</title>
        <authorList>
            <person name="Meile L."/>
            <person name="Fischer K."/>
            <person name="Leisinger T."/>
        </authorList>
    </citation>
    <scope>NUCLEOTIDE SEQUENCE [GENOMIC DNA]</scope>
    <source>
        <strain>ATCC BAA-927 / DSM 2133 / JCM 14651 / NBRC 100331 / OCM 82 / Marburg</strain>
    </source>
</reference>
<reference key="2">
    <citation type="journal article" date="2010" name="J. Bacteriol.">
        <title>Complete genome sequence of Methanothermobacter marburgensis, a methanoarchaeon model organism.</title>
        <authorList>
            <person name="Liesegang H."/>
            <person name="Kaster A.K."/>
            <person name="Wiezer A."/>
            <person name="Goenrich M."/>
            <person name="Wollherr A."/>
            <person name="Seedorf H."/>
            <person name="Gottschalk G."/>
            <person name="Thauer R.K."/>
        </authorList>
    </citation>
    <scope>NUCLEOTIDE SEQUENCE [LARGE SCALE GENOMIC DNA]</scope>
    <source>
        <strain>ATCC BAA-927 / DSM 2133 / JCM 14651 / NBRC 100331 / OCM 82 / Marburg</strain>
    </source>
</reference>
<evidence type="ECO:0000250" key="1"/>
<evidence type="ECO:0000305" key="2"/>
<feature type="chain" id="PRO_0000160007" description="Superoxide dismutase [Fe]">
    <location>
        <begin position="1"/>
        <end position="202"/>
    </location>
</feature>
<feature type="binding site" evidence="1">
    <location>
        <position position="30"/>
    </location>
    <ligand>
        <name>Fe cation</name>
        <dbReference type="ChEBI" id="CHEBI:24875"/>
    </ligand>
</feature>
<feature type="binding site" evidence="1">
    <location>
        <position position="78"/>
    </location>
    <ligand>
        <name>Fe cation</name>
        <dbReference type="ChEBI" id="CHEBI:24875"/>
    </ligand>
</feature>
<feature type="binding site" evidence="1">
    <location>
        <position position="164"/>
    </location>
    <ligand>
        <name>Fe cation</name>
        <dbReference type="ChEBI" id="CHEBI:24875"/>
    </ligand>
</feature>
<feature type="binding site" evidence="1">
    <location>
        <position position="168"/>
    </location>
    <ligand>
        <name>Fe cation</name>
        <dbReference type="ChEBI" id="CHEBI:24875"/>
    </ligand>
</feature>
<dbReference type="EC" id="1.15.1.1"/>
<dbReference type="EMBL" id="X74264">
    <property type="protein sequence ID" value="CAA52323.1"/>
    <property type="molecule type" value="Genomic_DNA"/>
</dbReference>
<dbReference type="EMBL" id="CP001710">
    <property type="protein sequence ID" value="ADL58206.1"/>
    <property type="molecule type" value="Genomic_DNA"/>
</dbReference>
<dbReference type="PIR" id="S51097">
    <property type="entry name" value="S51097"/>
</dbReference>
<dbReference type="RefSeq" id="WP_013295430.1">
    <property type="nucleotide sequence ID" value="NC_014408.1"/>
</dbReference>
<dbReference type="SMR" id="Q60036"/>
<dbReference type="STRING" id="79929.MTBMA_c06110"/>
<dbReference type="PaxDb" id="79929-MTBMA_c06110"/>
<dbReference type="GeneID" id="77399392"/>
<dbReference type="GeneID" id="9704319"/>
<dbReference type="KEGG" id="mmg:MTBMA_c06110"/>
<dbReference type="PATRIC" id="fig|79929.8.peg.595"/>
<dbReference type="HOGENOM" id="CLU_031625_2_2_2"/>
<dbReference type="OrthoDB" id="32917at2157"/>
<dbReference type="Proteomes" id="UP000000345">
    <property type="component" value="Chromosome"/>
</dbReference>
<dbReference type="GO" id="GO:0046872">
    <property type="term" value="F:metal ion binding"/>
    <property type="evidence" value="ECO:0007669"/>
    <property type="project" value="UniProtKB-KW"/>
</dbReference>
<dbReference type="GO" id="GO:0004784">
    <property type="term" value="F:superoxide dismutase activity"/>
    <property type="evidence" value="ECO:0007669"/>
    <property type="project" value="UniProtKB-EC"/>
</dbReference>
<dbReference type="FunFam" id="3.55.40.20:FF:000004">
    <property type="entry name" value="Superoxide dismutase [Fe]"/>
    <property type="match status" value="1"/>
</dbReference>
<dbReference type="Gene3D" id="1.10.287.990">
    <property type="entry name" value="Fe,Mn superoxide dismutase (SOD) domain"/>
    <property type="match status" value="1"/>
</dbReference>
<dbReference type="Gene3D" id="3.55.40.20">
    <property type="entry name" value="Iron/manganese superoxide dismutase, C-terminal domain"/>
    <property type="match status" value="1"/>
</dbReference>
<dbReference type="InterPro" id="IPR050265">
    <property type="entry name" value="Fe/Mn_Superoxide_Dismutase"/>
</dbReference>
<dbReference type="InterPro" id="IPR001189">
    <property type="entry name" value="Mn/Fe_SOD"/>
</dbReference>
<dbReference type="InterPro" id="IPR019833">
    <property type="entry name" value="Mn/Fe_SOD_BS"/>
</dbReference>
<dbReference type="InterPro" id="IPR019832">
    <property type="entry name" value="Mn/Fe_SOD_C"/>
</dbReference>
<dbReference type="InterPro" id="IPR019831">
    <property type="entry name" value="Mn/Fe_SOD_N"/>
</dbReference>
<dbReference type="InterPro" id="IPR036324">
    <property type="entry name" value="Mn/Fe_SOD_N_sf"/>
</dbReference>
<dbReference type="InterPro" id="IPR036314">
    <property type="entry name" value="SOD_C_sf"/>
</dbReference>
<dbReference type="PANTHER" id="PTHR11404">
    <property type="entry name" value="SUPEROXIDE DISMUTASE 2"/>
    <property type="match status" value="1"/>
</dbReference>
<dbReference type="PANTHER" id="PTHR11404:SF6">
    <property type="entry name" value="SUPEROXIDE DISMUTASE [MN], MITOCHONDRIAL"/>
    <property type="match status" value="1"/>
</dbReference>
<dbReference type="Pfam" id="PF02777">
    <property type="entry name" value="Sod_Fe_C"/>
    <property type="match status" value="1"/>
</dbReference>
<dbReference type="Pfam" id="PF00081">
    <property type="entry name" value="Sod_Fe_N"/>
    <property type="match status" value="1"/>
</dbReference>
<dbReference type="PIRSF" id="PIRSF000349">
    <property type="entry name" value="SODismutase"/>
    <property type="match status" value="1"/>
</dbReference>
<dbReference type="PRINTS" id="PR01703">
    <property type="entry name" value="MNSODISMTASE"/>
</dbReference>
<dbReference type="SUPFAM" id="SSF54719">
    <property type="entry name" value="Fe,Mn superoxide dismutase (SOD), C-terminal domain"/>
    <property type="match status" value="1"/>
</dbReference>
<dbReference type="SUPFAM" id="SSF46609">
    <property type="entry name" value="Fe,Mn superoxide dismutase (SOD), N-terminal domain"/>
    <property type="match status" value="1"/>
</dbReference>
<dbReference type="PROSITE" id="PS00088">
    <property type="entry name" value="SOD_MN"/>
    <property type="match status" value="1"/>
</dbReference>
<protein>
    <recommendedName>
        <fullName>Superoxide dismutase [Fe]</fullName>
        <ecNumber>1.15.1.1</ecNumber>
    </recommendedName>
</protein>
<proteinExistence type="inferred from homology"/>
<sequence length="202" mass="23829">MEKKFYELPELPYPYDALEPYISEEQLRIHHEKHHQAYVDGANGVLRKLDDARENGEEVDIKAALKELSFHVGGYVLHLFFWGNMGPADECGGEPDGRLAEYIEKDFGSFQRFKKEFSQAAVSAEGSGWAVLTYCQRTDRLFIMQVEKHNVNVIPHFRILMVLDVWEHAYYIDYRNVRPDYVEAFWNIVNWKEVEKRFDDLF</sequence>
<organism>
    <name type="scientific">Methanothermobacter marburgensis (strain ATCC BAA-927 / DSM 2133 / JCM 14651 / NBRC 100331 / OCM 82 / Marburg)</name>
    <name type="common">Methanobacterium thermoautotrophicum</name>
    <dbReference type="NCBI Taxonomy" id="79929"/>
    <lineage>
        <taxon>Archaea</taxon>
        <taxon>Methanobacteriati</taxon>
        <taxon>Methanobacteriota</taxon>
        <taxon>Methanomada group</taxon>
        <taxon>Methanobacteria</taxon>
        <taxon>Methanobacteriales</taxon>
        <taxon>Methanobacteriaceae</taxon>
        <taxon>Methanothermobacter</taxon>
    </lineage>
</organism>
<name>SODF_METTM</name>
<accession>Q60036</accession>
<accession>D9PVF8</accession>
<comment type="function">
    <text>Destroys superoxide anion radicals which are normally produced within the cells and which are toxic to biological systems.</text>
</comment>
<comment type="catalytic activity">
    <reaction>
        <text>2 superoxide + 2 H(+) = H2O2 + O2</text>
        <dbReference type="Rhea" id="RHEA:20696"/>
        <dbReference type="ChEBI" id="CHEBI:15378"/>
        <dbReference type="ChEBI" id="CHEBI:15379"/>
        <dbReference type="ChEBI" id="CHEBI:16240"/>
        <dbReference type="ChEBI" id="CHEBI:18421"/>
        <dbReference type="EC" id="1.15.1.1"/>
    </reaction>
</comment>
<comment type="cofactor">
    <cofactor evidence="1">
        <name>Fe cation</name>
        <dbReference type="ChEBI" id="CHEBI:24875"/>
    </cofactor>
    <text evidence="1">Binds 1 Fe cation per subunit.</text>
</comment>
<comment type="subunit">
    <text>Homotetramer.</text>
</comment>
<comment type="similarity">
    <text evidence="2">Belongs to the iron/manganese superoxide dismutase family.</text>
</comment>
<keyword id="KW-0408">Iron</keyword>
<keyword id="KW-0479">Metal-binding</keyword>
<keyword id="KW-0560">Oxidoreductase</keyword>